<sequence>MSDRNPLIDADRRADEDNTLRPQTLDDFVGQAAARANLKVFIEAAKVRGEALDHVLFVGPPGLGKTTLAQIMAKELGVNFRSTSGPVIAKAGDLAALLTNLEERDVLFIDEIHRLSPAVEEILYPAMEDFQLDLIIGEGPAARSVKIDLAKFTLVAATTRLGLLTTPLRDRFGIPVRLNFYTVEELEYIVRRGARIMQMGISSDGAREVARRSRGTPRIVGRLLRRVRDFALVAGADIIDRRIADEALSRLEVDNRGLDQLDRRYLNIIARNFGGGPVGIETIAAGLSEPRDAIEDIIEPYLIQQGFLQRTPRGRVLTAVAWQHLGLPAPAEIIQQSQYGLFMEDE</sequence>
<name>RUVB_BRUME</name>
<keyword id="KW-0067">ATP-binding</keyword>
<keyword id="KW-0963">Cytoplasm</keyword>
<keyword id="KW-0227">DNA damage</keyword>
<keyword id="KW-0233">DNA recombination</keyword>
<keyword id="KW-0234">DNA repair</keyword>
<keyword id="KW-0238">DNA-binding</keyword>
<keyword id="KW-0378">Hydrolase</keyword>
<keyword id="KW-0547">Nucleotide-binding</keyword>
<dbReference type="EC" id="3.6.4.-" evidence="1"/>
<dbReference type="EMBL" id="AE008917">
    <property type="protein sequence ID" value="AAL51515.1"/>
    <property type="molecule type" value="Genomic_DNA"/>
</dbReference>
<dbReference type="PIR" id="AH3293">
    <property type="entry name" value="AH3293"/>
</dbReference>
<dbReference type="RefSeq" id="WP_004684152.1">
    <property type="nucleotide sequence ID" value="NZ_GG703781.1"/>
</dbReference>
<dbReference type="SMR" id="Q8YIV5"/>
<dbReference type="GeneID" id="29593091"/>
<dbReference type="KEGG" id="bme:BMEI0334"/>
<dbReference type="KEGG" id="bmel:DK63_1100"/>
<dbReference type="PATRIC" id="fig|224914.52.peg.1158"/>
<dbReference type="eggNOG" id="COG2255">
    <property type="taxonomic scope" value="Bacteria"/>
</dbReference>
<dbReference type="PhylomeDB" id="Q8YIV5"/>
<dbReference type="Proteomes" id="UP000000419">
    <property type="component" value="Chromosome I"/>
</dbReference>
<dbReference type="GO" id="GO:0005737">
    <property type="term" value="C:cytoplasm"/>
    <property type="evidence" value="ECO:0007669"/>
    <property type="project" value="UniProtKB-SubCell"/>
</dbReference>
<dbReference type="GO" id="GO:0048476">
    <property type="term" value="C:Holliday junction resolvase complex"/>
    <property type="evidence" value="ECO:0007669"/>
    <property type="project" value="UniProtKB-UniRule"/>
</dbReference>
<dbReference type="GO" id="GO:0005524">
    <property type="term" value="F:ATP binding"/>
    <property type="evidence" value="ECO:0007669"/>
    <property type="project" value="UniProtKB-UniRule"/>
</dbReference>
<dbReference type="GO" id="GO:0016887">
    <property type="term" value="F:ATP hydrolysis activity"/>
    <property type="evidence" value="ECO:0007669"/>
    <property type="project" value="InterPro"/>
</dbReference>
<dbReference type="GO" id="GO:0000400">
    <property type="term" value="F:four-way junction DNA binding"/>
    <property type="evidence" value="ECO:0007669"/>
    <property type="project" value="UniProtKB-UniRule"/>
</dbReference>
<dbReference type="GO" id="GO:0009378">
    <property type="term" value="F:four-way junction helicase activity"/>
    <property type="evidence" value="ECO:0007669"/>
    <property type="project" value="InterPro"/>
</dbReference>
<dbReference type="GO" id="GO:0006310">
    <property type="term" value="P:DNA recombination"/>
    <property type="evidence" value="ECO:0007669"/>
    <property type="project" value="UniProtKB-UniRule"/>
</dbReference>
<dbReference type="GO" id="GO:0006281">
    <property type="term" value="P:DNA repair"/>
    <property type="evidence" value="ECO:0007669"/>
    <property type="project" value="UniProtKB-UniRule"/>
</dbReference>
<dbReference type="CDD" id="cd00009">
    <property type="entry name" value="AAA"/>
    <property type="match status" value="1"/>
</dbReference>
<dbReference type="Gene3D" id="1.10.8.60">
    <property type="match status" value="1"/>
</dbReference>
<dbReference type="Gene3D" id="3.40.50.300">
    <property type="entry name" value="P-loop containing nucleotide triphosphate hydrolases"/>
    <property type="match status" value="1"/>
</dbReference>
<dbReference type="Gene3D" id="1.10.10.10">
    <property type="entry name" value="Winged helix-like DNA-binding domain superfamily/Winged helix DNA-binding domain"/>
    <property type="match status" value="1"/>
</dbReference>
<dbReference type="HAMAP" id="MF_00016">
    <property type="entry name" value="DNA_HJ_migration_RuvB"/>
    <property type="match status" value="1"/>
</dbReference>
<dbReference type="InterPro" id="IPR003593">
    <property type="entry name" value="AAA+_ATPase"/>
</dbReference>
<dbReference type="InterPro" id="IPR041445">
    <property type="entry name" value="AAA_lid_4"/>
</dbReference>
<dbReference type="InterPro" id="IPR000641">
    <property type="entry name" value="CbxX/CfxQ"/>
</dbReference>
<dbReference type="InterPro" id="IPR004605">
    <property type="entry name" value="DNA_helicase_Holl-junc_RuvB"/>
</dbReference>
<dbReference type="InterPro" id="IPR027417">
    <property type="entry name" value="P-loop_NTPase"/>
</dbReference>
<dbReference type="InterPro" id="IPR008824">
    <property type="entry name" value="RuvB-like_N"/>
</dbReference>
<dbReference type="InterPro" id="IPR008823">
    <property type="entry name" value="RuvB_C"/>
</dbReference>
<dbReference type="InterPro" id="IPR036388">
    <property type="entry name" value="WH-like_DNA-bd_sf"/>
</dbReference>
<dbReference type="InterPro" id="IPR036390">
    <property type="entry name" value="WH_DNA-bd_sf"/>
</dbReference>
<dbReference type="NCBIfam" id="NF000868">
    <property type="entry name" value="PRK00080.1"/>
    <property type="match status" value="1"/>
</dbReference>
<dbReference type="NCBIfam" id="TIGR00635">
    <property type="entry name" value="ruvB"/>
    <property type="match status" value="1"/>
</dbReference>
<dbReference type="PANTHER" id="PTHR42848">
    <property type="match status" value="1"/>
</dbReference>
<dbReference type="PANTHER" id="PTHR42848:SF1">
    <property type="entry name" value="HOLLIDAY JUNCTION BRANCH MIGRATION COMPLEX SUBUNIT RUVB"/>
    <property type="match status" value="1"/>
</dbReference>
<dbReference type="Pfam" id="PF17864">
    <property type="entry name" value="AAA_lid_4"/>
    <property type="match status" value="1"/>
</dbReference>
<dbReference type="Pfam" id="PF05491">
    <property type="entry name" value="RuvB_C"/>
    <property type="match status" value="1"/>
</dbReference>
<dbReference type="Pfam" id="PF05496">
    <property type="entry name" value="RuvB_N"/>
    <property type="match status" value="1"/>
</dbReference>
<dbReference type="PRINTS" id="PR00819">
    <property type="entry name" value="CBXCFQXSUPER"/>
</dbReference>
<dbReference type="SMART" id="SM00382">
    <property type="entry name" value="AAA"/>
    <property type="match status" value="1"/>
</dbReference>
<dbReference type="SUPFAM" id="SSF52540">
    <property type="entry name" value="P-loop containing nucleoside triphosphate hydrolases"/>
    <property type="match status" value="1"/>
</dbReference>
<dbReference type="SUPFAM" id="SSF46785">
    <property type="entry name" value="Winged helix' DNA-binding domain"/>
    <property type="match status" value="1"/>
</dbReference>
<gene>
    <name evidence="1" type="primary">ruvB</name>
    <name type="ordered locus">BMEI0334</name>
</gene>
<evidence type="ECO:0000255" key="1">
    <source>
        <dbReference type="HAMAP-Rule" id="MF_00016"/>
    </source>
</evidence>
<protein>
    <recommendedName>
        <fullName evidence="1">Holliday junction branch migration complex subunit RuvB</fullName>
        <ecNumber evidence="1">3.6.4.-</ecNumber>
    </recommendedName>
</protein>
<feature type="chain" id="PRO_0000165505" description="Holliday junction branch migration complex subunit RuvB">
    <location>
        <begin position="1"/>
        <end position="346"/>
    </location>
</feature>
<feature type="region of interest" description="Large ATPase domain (RuvB-L)" evidence="1">
    <location>
        <begin position="1"/>
        <end position="181"/>
    </location>
</feature>
<feature type="region of interest" description="Small ATPAse domain (RuvB-S)" evidence="1">
    <location>
        <begin position="182"/>
        <end position="252"/>
    </location>
</feature>
<feature type="region of interest" description="Head domain (RuvB-H)" evidence="1">
    <location>
        <begin position="255"/>
        <end position="346"/>
    </location>
</feature>
<feature type="binding site" evidence="1">
    <location>
        <position position="20"/>
    </location>
    <ligand>
        <name>ATP</name>
        <dbReference type="ChEBI" id="CHEBI:30616"/>
    </ligand>
</feature>
<feature type="binding site" evidence="1">
    <location>
        <position position="21"/>
    </location>
    <ligand>
        <name>ATP</name>
        <dbReference type="ChEBI" id="CHEBI:30616"/>
    </ligand>
</feature>
<feature type="binding site" evidence="1">
    <location>
        <position position="62"/>
    </location>
    <ligand>
        <name>ATP</name>
        <dbReference type="ChEBI" id="CHEBI:30616"/>
    </ligand>
</feature>
<feature type="binding site" evidence="1">
    <location>
        <position position="65"/>
    </location>
    <ligand>
        <name>ATP</name>
        <dbReference type="ChEBI" id="CHEBI:30616"/>
    </ligand>
</feature>
<feature type="binding site" evidence="1">
    <location>
        <position position="66"/>
    </location>
    <ligand>
        <name>ATP</name>
        <dbReference type="ChEBI" id="CHEBI:30616"/>
    </ligand>
</feature>
<feature type="binding site" evidence="1">
    <location>
        <position position="66"/>
    </location>
    <ligand>
        <name>Mg(2+)</name>
        <dbReference type="ChEBI" id="CHEBI:18420"/>
    </ligand>
</feature>
<feature type="binding site" evidence="1">
    <location>
        <position position="67"/>
    </location>
    <ligand>
        <name>ATP</name>
        <dbReference type="ChEBI" id="CHEBI:30616"/>
    </ligand>
</feature>
<feature type="binding site" evidence="1">
    <location>
        <begin position="128"/>
        <end position="130"/>
    </location>
    <ligand>
        <name>ATP</name>
        <dbReference type="ChEBI" id="CHEBI:30616"/>
    </ligand>
</feature>
<feature type="binding site" evidence="1">
    <location>
        <position position="171"/>
    </location>
    <ligand>
        <name>ATP</name>
        <dbReference type="ChEBI" id="CHEBI:30616"/>
    </ligand>
</feature>
<feature type="binding site" evidence="1">
    <location>
        <position position="181"/>
    </location>
    <ligand>
        <name>ATP</name>
        <dbReference type="ChEBI" id="CHEBI:30616"/>
    </ligand>
</feature>
<feature type="binding site" evidence="1">
    <location>
        <position position="218"/>
    </location>
    <ligand>
        <name>ATP</name>
        <dbReference type="ChEBI" id="CHEBI:30616"/>
    </ligand>
</feature>
<feature type="binding site" evidence="1">
    <location>
        <position position="291"/>
    </location>
    <ligand>
        <name>DNA</name>
        <dbReference type="ChEBI" id="CHEBI:16991"/>
    </ligand>
</feature>
<feature type="binding site" evidence="1">
    <location>
        <position position="310"/>
    </location>
    <ligand>
        <name>DNA</name>
        <dbReference type="ChEBI" id="CHEBI:16991"/>
    </ligand>
</feature>
<feature type="binding site" evidence="1">
    <location>
        <position position="315"/>
    </location>
    <ligand>
        <name>DNA</name>
        <dbReference type="ChEBI" id="CHEBI:16991"/>
    </ligand>
</feature>
<reference key="1">
    <citation type="journal article" date="2002" name="Proc. Natl. Acad. Sci. U.S.A.">
        <title>The genome sequence of the facultative intracellular pathogen Brucella melitensis.</title>
        <authorList>
            <person name="DelVecchio V.G."/>
            <person name="Kapatral V."/>
            <person name="Redkar R.J."/>
            <person name="Patra G."/>
            <person name="Mujer C."/>
            <person name="Los T."/>
            <person name="Ivanova N."/>
            <person name="Anderson I."/>
            <person name="Bhattacharyya A."/>
            <person name="Lykidis A."/>
            <person name="Reznik G."/>
            <person name="Jablonski L."/>
            <person name="Larsen N."/>
            <person name="D'Souza M."/>
            <person name="Bernal A."/>
            <person name="Mazur M."/>
            <person name="Goltsman E."/>
            <person name="Selkov E."/>
            <person name="Elzer P.H."/>
            <person name="Hagius S."/>
            <person name="O'Callaghan D."/>
            <person name="Letesson J.-J."/>
            <person name="Haselkorn R."/>
            <person name="Kyrpides N.C."/>
            <person name="Overbeek R."/>
        </authorList>
    </citation>
    <scope>NUCLEOTIDE SEQUENCE [LARGE SCALE GENOMIC DNA]</scope>
    <source>
        <strain>ATCC 23456 / CCUG 17765 / NCTC 10094 / 16M</strain>
    </source>
</reference>
<accession>Q8YIV5</accession>
<proteinExistence type="inferred from homology"/>
<organism>
    <name type="scientific">Brucella melitensis biotype 1 (strain ATCC 23456 / CCUG 17765 / NCTC 10094 / 16M)</name>
    <dbReference type="NCBI Taxonomy" id="224914"/>
    <lineage>
        <taxon>Bacteria</taxon>
        <taxon>Pseudomonadati</taxon>
        <taxon>Pseudomonadota</taxon>
        <taxon>Alphaproteobacteria</taxon>
        <taxon>Hyphomicrobiales</taxon>
        <taxon>Brucellaceae</taxon>
        <taxon>Brucella/Ochrobactrum group</taxon>
        <taxon>Brucella</taxon>
    </lineage>
</organism>
<comment type="function">
    <text evidence="1">The RuvA-RuvB-RuvC complex processes Holliday junction (HJ) DNA during genetic recombination and DNA repair, while the RuvA-RuvB complex plays an important role in the rescue of blocked DNA replication forks via replication fork reversal (RFR). RuvA specifically binds to HJ cruciform DNA, conferring on it an open structure. The RuvB hexamer acts as an ATP-dependent pump, pulling dsDNA into and through the RuvAB complex. RuvB forms 2 homohexamers on either side of HJ DNA bound by 1 or 2 RuvA tetramers; 4 subunits per hexamer contact DNA at a time. Coordinated motions by a converter formed by DNA-disengaged RuvB subunits stimulates ATP hydrolysis and nucleotide exchange. Immobilization of the converter enables RuvB to convert the ATP-contained energy into a lever motion, pulling 2 nucleotides of DNA out of the RuvA tetramer per ATP hydrolyzed, thus driving DNA branch migration. The RuvB motors rotate together with the DNA substrate, which together with the progressing nucleotide cycle form the mechanistic basis for DNA recombination by continuous HJ branch migration. Branch migration allows RuvC to scan DNA until it finds its consensus sequence, where it cleaves and resolves cruciform DNA.</text>
</comment>
<comment type="catalytic activity">
    <reaction evidence="1">
        <text>ATP + H2O = ADP + phosphate + H(+)</text>
        <dbReference type="Rhea" id="RHEA:13065"/>
        <dbReference type="ChEBI" id="CHEBI:15377"/>
        <dbReference type="ChEBI" id="CHEBI:15378"/>
        <dbReference type="ChEBI" id="CHEBI:30616"/>
        <dbReference type="ChEBI" id="CHEBI:43474"/>
        <dbReference type="ChEBI" id="CHEBI:456216"/>
    </reaction>
</comment>
<comment type="subunit">
    <text evidence="1">Homohexamer. Forms an RuvA(8)-RuvB(12)-Holliday junction (HJ) complex. HJ DNA is sandwiched between 2 RuvA tetramers; dsDNA enters through RuvA and exits via RuvB. An RuvB hexamer assembles on each DNA strand where it exits the tetramer. Each RuvB hexamer is contacted by two RuvA subunits (via domain III) on 2 adjacent RuvB subunits; this complex drives branch migration. In the full resolvosome a probable DNA-RuvA(4)-RuvB(12)-RuvC(2) complex forms which resolves the HJ.</text>
</comment>
<comment type="subcellular location">
    <subcellularLocation>
        <location evidence="1">Cytoplasm</location>
    </subcellularLocation>
</comment>
<comment type="domain">
    <text evidence="1">Has 3 domains, the large (RuvB-L) and small ATPase (RuvB-S) domains and the C-terminal head (RuvB-H) domain. The head domain binds DNA, while the ATPase domains jointly bind ATP, ADP or are empty depending on the state of the subunit in the translocation cycle. During a single DNA translocation step the structure of each domain remains the same, but their relative positions change.</text>
</comment>
<comment type="similarity">
    <text evidence="1">Belongs to the RuvB family.</text>
</comment>